<evidence type="ECO:0000255" key="1">
    <source>
        <dbReference type="HAMAP-Rule" id="MF_01971"/>
    </source>
</evidence>
<feature type="chain" id="PRO_0000361943" description="Kynurenine 3-monooxygenase">
    <location>
        <begin position="1"/>
        <end position="454"/>
    </location>
</feature>
<gene>
    <name evidence="1" type="primary">kmo</name>
    <name type="ordered locus">Sare_4893</name>
</gene>
<protein>
    <recommendedName>
        <fullName evidence="1">Kynurenine 3-monooxygenase</fullName>
        <ecNumber evidence="1">1.14.13.9</ecNumber>
    </recommendedName>
    <alternativeName>
        <fullName evidence="1">Kynurenine 3-hydroxylase</fullName>
    </alternativeName>
</protein>
<reference key="1">
    <citation type="submission" date="2007-10" db="EMBL/GenBank/DDBJ databases">
        <title>Complete sequence of Salinispora arenicola CNS-205.</title>
        <authorList>
            <consortium name="US DOE Joint Genome Institute"/>
            <person name="Copeland A."/>
            <person name="Lucas S."/>
            <person name="Lapidus A."/>
            <person name="Barry K."/>
            <person name="Glavina del Rio T."/>
            <person name="Dalin E."/>
            <person name="Tice H."/>
            <person name="Pitluck S."/>
            <person name="Foster B."/>
            <person name="Schmutz J."/>
            <person name="Larimer F."/>
            <person name="Land M."/>
            <person name="Hauser L."/>
            <person name="Kyrpides N."/>
            <person name="Ivanova N."/>
            <person name="Jensen P.R."/>
            <person name="Moore B.S."/>
            <person name="Penn K."/>
            <person name="Jenkins C."/>
            <person name="Udwary D."/>
            <person name="Xiang L."/>
            <person name="Gontang E."/>
            <person name="Richardson P."/>
        </authorList>
    </citation>
    <scope>NUCLEOTIDE SEQUENCE [LARGE SCALE GENOMIC DNA]</scope>
    <source>
        <strain>CNS-205</strain>
    </source>
</reference>
<keyword id="KW-0274">FAD</keyword>
<keyword id="KW-0285">Flavoprotein</keyword>
<keyword id="KW-0503">Monooxygenase</keyword>
<keyword id="KW-0521">NADP</keyword>
<keyword id="KW-0560">Oxidoreductase</keyword>
<keyword id="KW-0662">Pyridine nucleotide biosynthesis</keyword>
<dbReference type="EC" id="1.14.13.9" evidence="1"/>
<dbReference type="EMBL" id="CP000850">
    <property type="protein sequence ID" value="ABW00643.1"/>
    <property type="molecule type" value="Genomic_DNA"/>
</dbReference>
<dbReference type="SMR" id="A8LVF4"/>
<dbReference type="STRING" id="391037.Sare_4893"/>
<dbReference type="KEGG" id="saq:Sare_4893"/>
<dbReference type="PATRIC" id="fig|391037.6.peg.4940"/>
<dbReference type="eggNOG" id="COG0654">
    <property type="taxonomic scope" value="Bacteria"/>
</dbReference>
<dbReference type="HOGENOM" id="CLU_023210_0_1_11"/>
<dbReference type="OrthoDB" id="9782160at2"/>
<dbReference type="UniPathway" id="UPA00253">
    <property type="reaction ID" value="UER00328"/>
</dbReference>
<dbReference type="GO" id="GO:0071949">
    <property type="term" value="F:FAD binding"/>
    <property type="evidence" value="ECO:0007669"/>
    <property type="project" value="InterPro"/>
</dbReference>
<dbReference type="GO" id="GO:0004502">
    <property type="term" value="F:kynurenine 3-monooxygenase activity"/>
    <property type="evidence" value="ECO:0007669"/>
    <property type="project" value="UniProtKB-UniRule"/>
</dbReference>
<dbReference type="GO" id="GO:0043420">
    <property type="term" value="P:anthranilate metabolic process"/>
    <property type="evidence" value="ECO:0007669"/>
    <property type="project" value="UniProtKB-UniRule"/>
</dbReference>
<dbReference type="GO" id="GO:0070189">
    <property type="term" value="P:kynurenine metabolic process"/>
    <property type="evidence" value="ECO:0007669"/>
    <property type="project" value="TreeGrafter"/>
</dbReference>
<dbReference type="GO" id="GO:0006569">
    <property type="term" value="P:L-tryptophan catabolic process"/>
    <property type="evidence" value="ECO:0007669"/>
    <property type="project" value="UniProtKB-UniRule"/>
</dbReference>
<dbReference type="GO" id="GO:0009435">
    <property type="term" value="P:NAD biosynthetic process"/>
    <property type="evidence" value="ECO:0007669"/>
    <property type="project" value="UniProtKB-UniPathway"/>
</dbReference>
<dbReference type="GO" id="GO:0019805">
    <property type="term" value="P:quinolinate biosynthetic process"/>
    <property type="evidence" value="ECO:0007669"/>
    <property type="project" value="UniProtKB-UniRule"/>
</dbReference>
<dbReference type="FunFam" id="3.50.50.60:FF:000185">
    <property type="entry name" value="Kynurenine 3-monooxygenase"/>
    <property type="match status" value="1"/>
</dbReference>
<dbReference type="Gene3D" id="3.50.50.60">
    <property type="entry name" value="FAD/NAD(P)-binding domain"/>
    <property type="match status" value="1"/>
</dbReference>
<dbReference type="HAMAP" id="MF_01971">
    <property type="entry name" value="Kynurenine_monooxygenase"/>
    <property type="match status" value="1"/>
</dbReference>
<dbReference type="InterPro" id="IPR002938">
    <property type="entry name" value="FAD-bd"/>
</dbReference>
<dbReference type="InterPro" id="IPR036188">
    <property type="entry name" value="FAD/NAD-bd_sf"/>
</dbReference>
<dbReference type="InterPro" id="IPR027545">
    <property type="entry name" value="Kynurenine_monooxygenase"/>
</dbReference>
<dbReference type="PANTHER" id="PTHR46028">
    <property type="entry name" value="KYNURENINE 3-MONOOXYGENASE"/>
    <property type="match status" value="1"/>
</dbReference>
<dbReference type="PANTHER" id="PTHR46028:SF2">
    <property type="entry name" value="KYNURENINE 3-MONOOXYGENASE"/>
    <property type="match status" value="1"/>
</dbReference>
<dbReference type="Pfam" id="PF01494">
    <property type="entry name" value="FAD_binding_3"/>
    <property type="match status" value="1"/>
</dbReference>
<dbReference type="PRINTS" id="PR00420">
    <property type="entry name" value="RNGMNOXGNASE"/>
</dbReference>
<dbReference type="SUPFAM" id="SSF51905">
    <property type="entry name" value="FAD/NAD(P)-binding domain"/>
    <property type="match status" value="1"/>
</dbReference>
<organism>
    <name type="scientific">Salinispora arenicola (strain CNS-205)</name>
    <dbReference type="NCBI Taxonomy" id="391037"/>
    <lineage>
        <taxon>Bacteria</taxon>
        <taxon>Bacillati</taxon>
        <taxon>Actinomycetota</taxon>
        <taxon>Actinomycetes</taxon>
        <taxon>Micromonosporales</taxon>
        <taxon>Micromonosporaceae</taxon>
        <taxon>Salinispora</taxon>
    </lineage>
</organism>
<proteinExistence type="inferred from homology"/>
<comment type="function">
    <text evidence="1">Catalyzes the hydroxylation of L-kynurenine (L-Kyn) to form 3-hydroxy-L-kynurenine (L-3OHKyn). Required for synthesis of quinolinic acid.</text>
</comment>
<comment type="catalytic activity">
    <reaction evidence="1">
        <text>L-kynurenine + NADPH + O2 + H(+) = 3-hydroxy-L-kynurenine + NADP(+) + H2O</text>
        <dbReference type="Rhea" id="RHEA:20545"/>
        <dbReference type="ChEBI" id="CHEBI:15377"/>
        <dbReference type="ChEBI" id="CHEBI:15378"/>
        <dbReference type="ChEBI" id="CHEBI:15379"/>
        <dbReference type="ChEBI" id="CHEBI:57783"/>
        <dbReference type="ChEBI" id="CHEBI:57959"/>
        <dbReference type="ChEBI" id="CHEBI:58125"/>
        <dbReference type="ChEBI" id="CHEBI:58349"/>
        <dbReference type="EC" id="1.14.13.9"/>
    </reaction>
</comment>
<comment type="cofactor">
    <cofactor evidence="1">
        <name>FAD</name>
        <dbReference type="ChEBI" id="CHEBI:57692"/>
    </cofactor>
</comment>
<comment type="pathway">
    <text evidence="1">Cofactor biosynthesis; NAD(+) biosynthesis; quinolinate from L-kynurenine: step 1/3.</text>
</comment>
<comment type="similarity">
    <text evidence="1">Belongs to the aromatic-ring hydroxylase family. KMO subfamily.</text>
</comment>
<name>KMO_SALAI</name>
<accession>A8LVF4</accession>
<sequence>MNRRRERVVVVGAGLAGSLAALYLARQGHEVDIFERRPDPRSALAGPEGRSINLGLSARGMRALDGVGLLADVLKHSVPMRDRVVHSPDGGVRAQPYGVREHEILHSVLREELISLVVSAAEAEPGVRFHFDSLLTSLDRETGTVRVAPTAGGEASTVTADLVVGADGVFSTVRQQMQHGLRANYAQDFLPWGYKELTIPVGTDGQPRVRLEALHVWPGHEALMVAHPNRDGSLTCTLFMAHEGPVSFAALDTPAAVRDFFRRRFPDAEELMPDLVREITEHPVGHLVTVRTAPWRYADRVVLIGDAAHAVYPFYGQGMNSAFEDCVVLDECLTAHPDRAAALAAYEAARKPHTDVLADLSTANFEDLRDRVHRLGYSASAAADRLLARLLPQRWVPLYAMVAHTTIPYADALARANRQDRILRRAGAGLTLAVGLAATAAALRVGRRRRAARR</sequence>